<feature type="chain" id="PRO_0000314829" description="2-hydroxyacyl-CoA lyase 2">
    <location>
        <begin position="1"/>
        <end position="640"/>
    </location>
</feature>
<feature type="transmembrane region" description="Helical" evidence="5">
    <location>
        <begin position="2"/>
        <end position="22"/>
    </location>
</feature>
<feature type="region of interest" description="Thiamine pyrophosphate binding" evidence="3">
    <location>
        <begin position="477"/>
        <end position="557"/>
    </location>
</feature>
<feature type="binding site" evidence="3">
    <location>
        <position position="102"/>
    </location>
    <ligand>
        <name>thiamine diphosphate</name>
        <dbReference type="ChEBI" id="CHEBI:58937"/>
    </ligand>
</feature>
<feature type="binding site" evidence="3">
    <location>
        <position position="528"/>
    </location>
    <ligand>
        <name>Mg(2+)</name>
        <dbReference type="ChEBI" id="CHEBI:18420"/>
    </ligand>
</feature>
<feature type="binding site" evidence="3">
    <location>
        <position position="554"/>
    </location>
    <ligand>
        <name>Mg(2+)</name>
        <dbReference type="ChEBI" id="CHEBI:18420"/>
    </ligand>
</feature>
<name>HACL2_CAEEL</name>
<keyword id="KW-0256">Endoplasmic reticulum</keyword>
<keyword id="KW-0276">Fatty acid metabolism</keyword>
<keyword id="KW-0443">Lipid metabolism</keyword>
<keyword id="KW-0456">Lyase</keyword>
<keyword id="KW-0460">Magnesium</keyword>
<keyword id="KW-0472">Membrane</keyword>
<keyword id="KW-0479">Metal-binding</keyword>
<keyword id="KW-1185">Reference proteome</keyword>
<keyword id="KW-0786">Thiamine pyrophosphate</keyword>
<keyword id="KW-0812">Transmembrane</keyword>
<keyword id="KW-1133">Transmembrane helix</keyword>
<sequence>MVLFLIIAAIIIGLLLWKWLDVRSTDELTSMVKLLGSGNGQHVLSNAFQVDEKSKRHGGELVASVLKAHDVEEIFVLCGGHISPILVAAEKLGIKIVDTRHEVTAVFAADAVARLRQSIGVAAVTAGPGLTNTITAVKNAQMAESPLLLIGGAAPTLLKGRGALQDIDQMVLFRPLCKYVARVERLRDIVPTVREAIKAAKSGCPGPVFVEFPVDVLYPYELVVKEIGFNPNAKGFIQRALNFYLRCHVSRQFGNAWAPQTITPLPTNIPMPKSEKIQEIVQLVKSAKRPVLLIGSQATLPPVKPADLVKAVEALGCPVFLGGMARGLLGKDHPLQMRQVRRDALKDADLTILAGTVCDFRLSYGRTLSKKSKIVALNRNSSQLTKNEKAFWNSDVSVQADVATSLVQVANALGANHTTTPTEWVKSLREKDDEKESANAKKMEQKLTNGFLNPLNFLRTLDQSLPDDAILVADGGDFVGSAAYIVRPRGPLQWLDPGAFGTLGVGGGFALGAKTVYPKRPVYIIWGDGSCGYSLMEYDTFARHKLPVIGIVGNDACWTQIAREQVPMFQSSVAVDLARTRYDNVAKSLGSWGETIDESNADSARKILDEALAVCRSGEQSALVNVLIGKTDFREGSISV</sequence>
<gene>
    <name type="ORF">T26C12.1</name>
</gene>
<evidence type="ECO:0000250" key="1"/>
<evidence type="ECO:0000250" key="2">
    <source>
        <dbReference type="UniProtKB" id="A1L0T0"/>
    </source>
</evidence>
<evidence type="ECO:0000250" key="3">
    <source>
        <dbReference type="UniProtKB" id="P40149"/>
    </source>
</evidence>
<evidence type="ECO:0000250" key="4">
    <source>
        <dbReference type="UniProtKB" id="Q8CHM7"/>
    </source>
</evidence>
<evidence type="ECO:0000255" key="5"/>
<evidence type="ECO:0000305" key="6"/>
<dbReference type="EC" id="4.1.2.-" evidence="2"/>
<dbReference type="EMBL" id="FO081749">
    <property type="protein sequence ID" value="CCD74004.1"/>
    <property type="molecule type" value="Genomic_DNA"/>
</dbReference>
<dbReference type="PIR" id="T33164">
    <property type="entry name" value="T33164"/>
</dbReference>
<dbReference type="RefSeq" id="NP_500306.1">
    <property type="nucleotide sequence ID" value="NM_067905.6"/>
</dbReference>
<dbReference type="SMR" id="O61856"/>
<dbReference type="BioGRID" id="42235">
    <property type="interactions" value="4"/>
</dbReference>
<dbReference type="FunCoup" id="O61856">
    <property type="interactions" value="590"/>
</dbReference>
<dbReference type="IntAct" id="O61856">
    <property type="interactions" value="1"/>
</dbReference>
<dbReference type="STRING" id="6239.T26C12.1.1"/>
<dbReference type="PaxDb" id="6239-T26C12.1"/>
<dbReference type="PeptideAtlas" id="O61856"/>
<dbReference type="EnsemblMetazoa" id="T26C12.1.1">
    <property type="protein sequence ID" value="T26C12.1.1"/>
    <property type="gene ID" value="WBGene00020831"/>
</dbReference>
<dbReference type="GeneID" id="177095"/>
<dbReference type="KEGG" id="cel:CELE_T26C12.1"/>
<dbReference type="UCSC" id="T26C12.1.1">
    <property type="organism name" value="c. elegans"/>
</dbReference>
<dbReference type="AGR" id="WB:WBGene00020831"/>
<dbReference type="CTD" id="177095"/>
<dbReference type="WormBase" id="T26C12.1">
    <property type="protein sequence ID" value="CE26009"/>
    <property type="gene ID" value="WBGene00020831"/>
</dbReference>
<dbReference type="eggNOG" id="KOG1185">
    <property type="taxonomic scope" value="Eukaryota"/>
</dbReference>
<dbReference type="GeneTree" id="ENSGT00940000158035"/>
<dbReference type="HOGENOM" id="CLU_013748_3_3_1"/>
<dbReference type="InParanoid" id="O61856"/>
<dbReference type="OMA" id="QETDMIG"/>
<dbReference type="OrthoDB" id="16262at2759"/>
<dbReference type="PhylomeDB" id="O61856"/>
<dbReference type="PRO" id="PR:O61856"/>
<dbReference type="Proteomes" id="UP000001940">
    <property type="component" value="Chromosome IV"/>
</dbReference>
<dbReference type="Bgee" id="WBGene00020831">
    <property type="expression patterns" value="Expressed in adult organism and 4 other cell types or tissues"/>
</dbReference>
<dbReference type="GO" id="GO:0005948">
    <property type="term" value="C:acetolactate synthase complex"/>
    <property type="evidence" value="ECO:0000318"/>
    <property type="project" value="GO_Central"/>
</dbReference>
<dbReference type="GO" id="GO:0005789">
    <property type="term" value="C:endoplasmic reticulum membrane"/>
    <property type="evidence" value="ECO:0000250"/>
    <property type="project" value="UniProtKB"/>
</dbReference>
<dbReference type="GO" id="GO:0003984">
    <property type="term" value="F:acetolactate synthase activity"/>
    <property type="evidence" value="ECO:0000318"/>
    <property type="project" value="GO_Central"/>
</dbReference>
<dbReference type="GO" id="GO:0050660">
    <property type="term" value="F:flavin adenine dinucleotide binding"/>
    <property type="evidence" value="ECO:0000318"/>
    <property type="project" value="GO_Central"/>
</dbReference>
<dbReference type="GO" id="GO:0016829">
    <property type="term" value="F:lyase activity"/>
    <property type="evidence" value="ECO:0007669"/>
    <property type="project" value="UniProtKB-KW"/>
</dbReference>
<dbReference type="GO" id="GO:0000287">
    <property type="term" value="F:magnesium ion binding"/>
    <property type="evidence" value="ECO:0007669"/>
    <property type="project" value="InterPro"/>
</dbReference>
<dbReference type="GO" id="GO:0030976">
    <property type="term" value="F:thiamine pyrophosphate binding"/>
    <property type="evidence" value="ECO:0007669"/>
    <property type="project" value="InterPro"/>
</dbReference>
<dbReference type="GO" id="GO:0001561">
    <property type="term" value="P:fatty acid alpha-oxidation"/>
    <property type="evidence" value="ECO:0000250"/>
    <property type="project" value="UniProtKB"/>
</dbReference>
<dbReference type="GO" id="GO:0009097">
    <property type="term" value="P:isoleucine biosynthetic process"/>
    <property type="evidence" value="ECO:0000318"/>
    <property type="project" value="GO_Central"/>
</dbReference>
<dbReference type="GO" id="GO:0009099">
    <property type="term" value="P:L-valine biosynthetic process"/>
    <property type="evidence" value="ECO:0000318"/>
    <property type="project" value="GO_Central"/>
</dbReference>
<dbReference type="CDD" id="cd02004">
    <property type="entry name" value="TPP_BZL_OCoD_HPCL"/>
    <property type="match status" value="1"/>
</dbReference>
<dbReference type="CDD" id="cd07035">
    <property type="entry name" value="TPP_PYR_POX_like"/>
    <property type="match status" value="1"/>
</dbReference>
<dbReference type="FunFam" id="3.40.50.970:FF:000007">
    <property type="entry name" value="Acetolactate synthase"/>
    <property type="match status" value="1"/>
</dbReference>
<dbReference type="Gene3D" id="3.40.50.970">
    <property type="match status" value="2"/>
</dbReference>
<dbReference type="Gene3D" id="3.40.50.1220">
    <property type="entry name" value="TPP-binding domain"/>
    <property type="match status" value="1"/>
</dbReference>
<dbReference type="InterPro" id="IPR029035">
    <property type="entry name" value="DHS-like_NAD/FAD-binding_dom"/>
</dbReference>
<dbReference type="InterPro" id="IPR029061">
    <property type="entry name" value="THDP-binding"/>
</dbReference>
<dbReference type="InterPro" id="IPR012000">
    <property type="entry name" value="Thiamin_PyroP_enz_cen_dom"/>
</dbReference>
<dbReference type="InterPro" id="IPR012001">
    <property type="entry name" value="Thiamin_PyroP_enz_TPP-bd_dom"/>
</dbReference>
<dbReference type="InterPro" id="IPR000399">
    <property type="entry name" value="TPP-bd_CS"/>
</dbReference>
<dbReference type="InterPro" id="IPR045229">
    <property type="entry name" value="TPP_enz"/>
</dbReference>
<dbReference type="InterPro" id="IPR011766">
    <property type="entry name" value="TPP_enzyme_TPP-bd"/>
</dbReference>
<dbReference type="PANTHER" id="PTHR18968:SF166">
    <property type="entry name" value="2-HYDROXYACYL-COA LYASE 2"/>
    <property type="match status" value="1"/>
</dbReference>
<dbReference type="PANTHER" id="PTHR18968">
    <property type="entry name" value="THIAMINE PYROPHOSPHATE ENZYMES"/>
    <property type="match status" value="1"/>
</dbReference>
<dbReference type="Pfam" id="PF02775">
    <property type="entry name" value="TPP_enzyme_C"/>
    <property type="match status" value="1"/>
</dbReference>
<dbReference type="Pfam" id="PF00205">
    <property type="entry name" value="TPP_enzyme_M"/>
    <property type="match status" value="1"/>
</dbReference>
<dbReference type="Pfam" id="PF02776">
    <property type="entry name" value="TPP_enzyme_N"/>
    <property type="match status" value="1"/>
</dbReference>
<dbReference type="SUPFAM" id="SSF52467">
    <property type="entry name" value="DHS-like NAD/FAD-binding domain"/>
    <property type="match status" value="1"/>
</dbReference>
<dbReference type="SUPFAM" id="SSF52518">
    <property type="entry name" value="Thiamin diphosphate-binding fold (THDP-binding)"/>
    <property type="match status" value="2"/>
</dbReference>
<dbReference type="PROSITE" id="PS00187">
    <property type="entry name" value="TPP_ENZYMES"/>
    <property type="match status" value="1"/>
</dbReference>
<organism>
    <name type="scientific">Caenorhabditis elegans</name>
    <dbReference type="NCBI Taxonomy" id="6239"/>
    <lineage>
        <taxon>Eukaryota</taxon>
        <taxon>Metazoa</taxon>
        <taxon>Ecdysozoa</taxon>
        <taxon>Nematoda</taxon>
        <taxon>Chromadorea</taxon>
        <taxon>Rhabditida</taxon>
        <taxon>Rhabditina</taxon>
        <taxon>Rhabditomorpha</taxon>
        <taxon>Rhabditoidea</taxon>
        <taxon>Rhabditidae</taxon>
        <taxon>Peloderinae</taxon>
        <taxon>Caenorhabditis</taxon>
    </lineage>
</organism>
<accession>O61856</accession>
<reference key="1">
    <citation type="journal article" date="1998" name="Science">
        <title>Genome sequence of the nematode C. elegans: a platform for investigating biology.</title>
        <authorList>
            <consortium name="The C. elegans sequencing consortium"/>
        </authorList>
    </citation>
    <scope>NUCLEOTIDE SEQUENCE [LARGE SCALE GENOMIC DNA]</scope>
    <source>
        <strain>Bristol N2</strain>
    </source>
</reference>
<proteinExistence type="inferred from homology"/>
<comment type="function">
    <text evidence="2">Endoplasmic reticulum 2-OH acyl-CoA lyase involved in the cleavage (C1 removal) reaction in the fatty acid alpha-oxydation in a thiamine pyrophosphate (TPP)-dependent manner.</text>
</comment>
<comment type="catalytic activity">
    <reaction evidence="2">
        <text>2-hydroxyoctadecanoyl-CoA = heptadecanal + formyl-CoA</text>
        <dbReference type="Rhea" id="RHEA:55196"/>
        <dbReference type="ChEBI" id="CHEBI:57376"/>
        <dbReference type="ChEBI" id="CHEBI:74116"/>
        <dbReference type="ChEBI" id="CHEBI:138631"/>
    </reaction>
    <physiologicalReaction direction="left-to-right" evidence="2">
        <dbReference type="Rhea" id="RHEA:55197"/>
    </physiologicalReaction>
</comment>
<comment type="catalytic activity">
    <reaction evidence="2">
        <text>(2R)-hydroxyhexadecanoyl-CoA = pentadecanal + formyl-CoA</text>
        <dbReference type="Rhea" id="RHEA:55212"/>
        <dbReference type="ChEBI" id="CHEBI:17302"/>
        <dbReference type="ChEBI" id="CHEBI:57376"/>
        <dbReference type="ChEBI" id="CHEBI:138654"/>
    </reaction>
    <physiologicalReaction direction="left-to-right" evidence="2">
        <dbReference type="Rhea" id="RHEA:55213"/>
    </physiologicalReaction>
</comment>
<comment type="cofactor">
    <cofactor evidence="4">
        <name>Mg(2+)</name>
        <dbReference type="ChEBI" id="CHEBI:18420"/>
    </cofactor>
    <text evidence="4">Binds 1 Mg(2+) ion per subunit.</text>
</comment>
<comment type="cofactor">
    <cofactor evidence="2">
        <name>thiamine diphosphate</name>
        <dbReference type="ChEBI" id="CHEBI:58937"/>
    </cofactor>
    <text evidence="1">Binds 1 thiamine pyrophosphate per subunit.</text>
</comment>
<comment type="subcellular location">
    <subcellularLocation>
        <location evidence="2">Endoplasmic reticulum membrane</location>
        <topology evidence="5">Single-pass membrane protein</topology>
    </subcellularLocation>
</comment>
<comment type="similarity">
    <text evidence="6">Belongs to the TPP enzyme family.</text>
</comment>
<protein>
    <recommendedName>
        <fullName>2-hydroxyacyl-CoA lyase 2</fullName>
        <ecNumber evidence="2">4.1.2.-</ecNumber>
    </recommendedName>
    <alternativeName>
        <fullName>IlvB-like protein</fullName>
    </alternativeName>
</protein>